<gene>
    <name type="primary">mrtG</name>
    <name type="synonym">mtrG</name>
    <name type="ordered locus">MJ0082</name>
</gene>
<name>MCRZ_METJA</name>
<accession>Q60387</accession>
<organism>
    <name type="scientific">Methanocaldococcus jannaschii (strain ATCC 43067 / DSM 2661 / JAL-1 / JCM 10045 / NBRC 100440)</name>
    <name type="common">Methanococcus jannaschii</name>
    <dbReference type="NCBI Taxonomy" id="243232"/>
    <lineage>
        <taxon>Archaea</taxon>
        <taxon>Methanobacteriati</taxon>
        <taxon>Methanobacteriota</taxon>
        <taxon>Methanomada group</taxon>
        <taxon>Methanococci</taxon>
        <taxon>Methanococcales</taxon>
        <taxon>Methanocaldococcaceae</taxon>
        <taxon>Methanocaldococcus</taxon>
    </lineage>
</organism>
<protein>
    <recommendedName>
        <fullName>Methyl-coenzyme M reductase II subunit gamma</fullName>
        <shortName>MCR II gamma</shortName>
        <ecNumber evidence="1">2.8.4.1</ecNumber>
    </recommendedName>
    <alternativeName>
        <fullName>Coenzyme-B sulfoethylthiotransferase gamma</fullName>
    </alternativeName>
</protein>
<keyword id="KW-0484">Methanogenesis</keyword>
<keyword id="KW-1185">Reference proteome</keyword>
<keyword id="KW-0808">Transferase</keyword>
<comment type="function">
    <text evidence="1">Component of the methyl-coenzyme M reductase (MCR) I that catalyzes the reductive cleavage of methyl-coenzyme M (CoM-S-CH3 or 2-(methylthio)ethanesulfonate) using coenzyme B (CoB or 7-mercaptoheptanoylthreonine phosphate) as reductant which results in the production of methane and the mixed heterodisulfide of CoB and CoM (CoM-S-S-CoB). This is the final step in methanogenesis.</text>
</comment>
<comment type="catalytic activity">
    <reaction evidence="1">
        <text>coenzyme B + methyl-coenzyme M = methane + coenzyme M-coenzyme B heterodisulfide</text>
        <dbReference type="Rhea" id="RHEA:12532"/>
        <dbReference type="ChEBI" id="CHEBI:16183"/>
        <dbReference type="ChEBI" id="CHEBI:58286"/>
        <dbReference type="ChEBI" id="CHEBI:58411"/>
        <dbReference type="ChEBI" id="CHEBI:58596"/>
        <dbReference type="EC" id="2.8.4.1"/>
    </reaction>
    <physiologicalReaction direction="left-to-right" evidence="1">
        <dbReference type="Rhea" id="RHEA:12533"/>
    </physiologicalReaction>
</comment>
<comment type="cofactor">
    <cofactor evidence="1">
        <name>coenzyme F430</name>
        <dbReference type="ChEBI" id="CHEBI:60540"/>
    </cofactor>
    <text evidence="1">Binds 2 coenzyme F430 non-covalently per MCR complex. Coenzyme F430 is a yellow nickel porphinoid. Methyl-coenzyme-M reductase is activated when the enzyme-bound coenzyme F430 is reduced to the Ni(I) oxidation state.</text>
</comment>
<comment type="pathway">
    <text evidence="1">One-carbon metabolism; methyl-coenzyme M reduction; methane from methyl-coenzyme M: step 1/1.</text>
</comment>
<comment type="subunit">
    <text evidence="1">MCR is a hexamer of two alpha, two beta, and two gamma chains, forming a dimer of heterotrimers.</text>
</comment>
<comment type="similarity">
    <text evidence="2">Belongs to the methyl-coenzyme M reductase gamma subunit family.</text>
</comment>
<dbReference type="EC" id="2.8.4.1" evidence="1"/>
<dbReference type="EMBL" id="L77117">
    <property type="protein sequence ID" value="AAB98062.1"/>
    <property type="molecule type" value="Genomic_DNA"/>
</dbReference>
<dbReference type="PIR" id="B64310">
    <property type="entry name" value="B64310"/>
</dbReference>
<dbReference type="RefSeq" id="WP_010869574.1">
    <property type="nucleotide sequence ID" value="NC_000909.1"/>
</dbReference>
<dbReference type="SMR" id="Q60387"/>
<dbReference type="FunCoup" id="Q60387">
    <property type="interactions" value="95"/>
</dbReference>
<dbReference type="STRING" id="243232.MJ_0082"/>
<dbReference type="PaxDb" id="243232-MJ_0082"/>
<dbReference type="EnsemblBacteria" id="AAB98062">
    <property type="protein sequence ID" value="AAB98062"/>
    <property type="gene ID" value="MJ_0082"/>
</dbReference>
<dbReference type="GeneID" id="1450921"/>
<dbReference type="KEGG" id="mja:MJ_0082"/>
<dbReference type="eggNOG" id="arCOG04858">
    <property type="taxonomic scope" value="Archaea"/>
</dbReference>
<dbReference type="HOGENOM" id="CLU_1092436_0_0_2"/>
<dbReference type="InParanoid" id="Q60387"/>
<dbReference type="OrthoDB" id="52520at2157"/>
<dbReference type="PhylomeDB" id="Q60387"/>
<dbReference type="UniPathway" id="UPA00646">
    <property type="reaction ID" value="UER00699"/>
</dbReference>
<dbReference type="Proteomes" id="UP000000805">
    <property type="component" value="Chromosome"/>
</dbReference>
<dbReference type="GO" id="GO:0050524">
    <property type="term" value="F:coenzyme-B sulfoethylthiotransferase activity"/>
    <property type="evidence" value="ECO:0007669"/>
    <property type="project" value="UniProtKB-EC"/>
</dbReference>
<dbReference type="GO" id="GO:0015948">
    <property type="term" value="P:methanogenesis"/>
    <property type="evidence" value="ECO:0007669"/>
    <property type="project" value="UniProtKB-KW"/>
</dbReference>
<dbReference type="CDD" id="cd00539">
    <property type="entry name" value="MCR_gamma"/>
    <property type="match status" value="1"/>
</dbReference>
<dbReference type="Gene3D" id="3.90.320.20">
    <property type="entry name" value="Methyl-coenzyme M reductase, gamma subunit"/>
    <property type="match status" value="1"/>
</dbReference>
<dbReference type="InterPro" id="IPR009024">
    <property type="entry name" value="Me_CoM_Rdtase_Fd-like_fold"/>
</dbReference>
<dbReference type="InterPro" id="IPR003178">
    <property type="entry name" value="Me_CoM_Rdtase_gsu"/>
</dbReference>
<dbReference type="InterPro" id="IPR036994">
    <property type="entry name" value="Me_CoM_Rdtase_gsu_sf"/>
</dbReference>
<dbReference type="NCBIfam" id="TIGR03259">
    <property type="entry name" value="met_CoM_red_gam"/>
    <property type="match status" value="1"/>
</dbReference>
<dbReference type="Pfam" id="PF02240">
    <property type="entry name" value="MCR_gamma"/>
    <property type="match status" value="1"/>
</dbReference>
<dbReference type="PIRSF" id="PIRSF000264">
    <property type="entry name" value="Meth_CoM_rd_gama"/>
    <property type="match status" value="1"/>
</dbReference>
<dbReference type="SUPFAM" id="SSF55088">
    <property type="entry name" value="Methyl-coenzyme M reductase subunits"/>
    <property type="match status" value="1"/>
</dbReference>
<feature type="chain" id="PRO_0000147477" description="Methyl-coenzyme M reductase II subunit gamma">
    <location>
        <begin position="1"/>
        <end position="266"/>
    </location>
</feature>
<feature type="binding site" evidence="1">
    <location>
        <position position="123"/>
    </location>
    <ligand>
        <name>coenzyme M</name>
        <dbReference type="ChEBI" id="CHEBI:58319"/>
    </ligand>
</feature>
<evidence type="ECO:0000250" key="1">
    <source>
        <dbReference type="UniProtKB" id="P11562"/>
    </source>
</evidence>
<evidence type="ECO:0000305" key="2"/>
<sequence length="266" mass="30764">MAYKPQFYPGNTLIAENRRKHMNPEVELKKLRDIPDDEIVKILGHRNPGESYKTVHPPLEEMDFEEDPIKDIVEPIQGAKEGVRVRYIQFADSMYNAPAQPYDRARTYMWRFRGIDTGTLSGRQVIEMRELDLEKISKNFLIDTEFFDPATCGIRGATVHGHSLRLDENGLMFDGLQRYIYDEKTGHVLYVKDQVGRPLDEPVDVGEPLPHDYLAKITTIYRKDNIGMREDKEALEVVQIIHEARTKGGFGLEVFKKDLKKRLGEE</sequence>
<proteinExistence type="inferred from homology"/>
<reference key="1">
    <citation type="journal article" date="1996" name="Science">
        <title>Complete genome sequence of the methanogenic archaeon, Methanococcus jannaschii.</title>
        <authorList>
            <person name="Bult C.J."/>
            <person name="White O."/>
            <person name="Olsen G.J."/>
            <person name="Zhou L."/>
            <person name="Fleischmann R.D."/>
            <person name="Sutton G.G."/>
            <person name="Blake J.A."/>
            <person name="FitzGerald L.M."/>
            <person name="Clayton R.A."/>
            <person name="Gocayne J.D."/>
            <person name="Kerlavage A.R."/>
            <person name="Dougherty B.A."/>
            <person name="Tomb J.-F."/>
            <person name="Adams M.D."/>
            <person name="Reich C.I."/>
            <person name="Overbeek R."/>
            <person name="Kirkness E.F."/>
            <person name="Weinstock K.G."/>
            <person name="Merrick J.M."/>
            <person name="Glodek A."/>
            <person name="Scott J.L."/>
            <person name="Geoghagen N.S.M."/>
            <person name="Weidman J.F."/>
            <person name="Fuhrmann J.L."/>
            <person name="Nguyen D."/>
            <person name="Utterback T.R."/>
            <person name="Kelley J.M."/>
            <person name="Peterson J.D."/>
            <person name="Sadow P.W."/>
            <person name="Hanna M.C."/>
            <person name="Cotton M.D."/>
            <person name="Roberts K.M."/>
            <person name="Hurst M.A."/>
            <person name="Kaine B.P."/>
            <person name="Borodovsky M."/>
            <person name="Klenk H.-P."/>
            <person name="Fraser C.M."/>
            <person name="Smith H.O."/>
            <person name="Woese C.R."/>
            <person name="Venter J.C."/>
        </authorList>
    </citation>
    <scope>NUCLEOTIDE SEQUENCE [LARGE SCALE GENOMIC DNA]</scope>
    <source>
        <strain>ATCC 43067 / DSM 2661 / JAL-1 / JCM 10045 / NBRC 100440</strain>
    </source>
</reference>